<comment type="function">
    <text evidence="3">Oxidase with broad substrate specificity, oxidizing aromatic azaheterocycles, such as phthalazine, as well as aldehydes, such as benzaldehyde and retinal.</text>
</comment>
<comment type="catalytic activity">
    <reaction>
        <text>an aldehyde + O2 + H2O = a carboxylate + H2O2 + H(+)</text>
        <dbReference type="Rhea" id="RHEA:16829"/>
        <dbReference type="ChEBI" id="CHEBI:15377"/>
        <dbReference type="ChEBI" id="CHEBI:15378"/>
        <dbReference type="ChEBI" id="CHEBI:15379"/>
        <dbReference type="ChEBI" id="CHEBI:16240"/>
        <dbReference type="ChEBI" id="CHEBI:17478"/>
        <dbReference type="ChEBI" id="CHEBI:29067"/>
        <dbReference type="EC" id="1.2.3.1"/>
    </reaction>
</comment>
<comment type="cofactor">
    <cofactor evidence="1">
        <name>[2Fe-2S] cluster</name>
        <dbReference type="ChEBI" id="CHEBI:190135"/>
    </cofactor>
    <text evidence="1">Binds 2 [2Fe-2S] clusters per subunit.</text>
</comment>
<comment type="cofactor">
    <cofactor evidence="1">
        <name>FAD</name>
        <dbReference type="ChEBI" id="CHEBI:57692"/>
    </cofactor>
    <text evidence="1">Binds 1 FAD per subunit.</text>
</comment>
<comment type="cofactor">
    <cofactor evidence="1">
        <name>Mo-molybdopterin</name>
        <dbReference type="ChEBI" id="CHEBI:71302"/>
    </cofactor>
    <text evidence="1">Binds 1 Mo-molybdopterin (Mo-MPT) cofactor per subunit.</text>
</comment>
<comment type="subunit">
    <text evidence="1">Homodimer.</text>
</comment>
<comment type="subcellular location">
    <subcellularLocation>
        <location evidence="3">Cytoplasm</location>
    </subcellularLocation>
</comment>
<comment type="miscellaneous">
    <text evidence="7">AOX genes evolved from a xanthine oxidoreductase ancestral precursor via a series of gene duplication and suppression/deletion events. Different animal species contain a different complement of AOX genes encoding an equivalent number of AOX isoenzymes. In mammals, the two extremes are represented by certain rodents such as mice and rats, which are endowed with 4 AOX genes, and by humans, whose genome is characterized by a single active gene (PubMed:23263164).</text>
</comment>
<comment type="similarity">
    <text evidence="6">Belongs to the xanthine dehydrogenase family.</text>
</comment>
<reference key="1">
    <citation type="journal article" date="2004" name="J. Biol. Chem.">
        <title>The aldehyde oxidase gene cluster in mice and rats. Aldehyde oxidase homologue 3, a novel member of the molybdo-flavoenzyme family with selective expression in the olfactory mucosa.</title>
        <authorList>
            <person name="Kurosaki M."/>
            <person name="Terao M."/>
            <person name="Barzago M.M."/>
            <person name="Bastone A."/>
            <person name="Bernardinello D."/>
            <person name="Salmona M."/>
            <person name="Garattini E."/>
        </authorList>
    </citation>
    <scope>NUCLEOTIDE SEQUENCE [MRNA]</scope>
    <source>
        <strain>CD Charles River</strain>
    </source>
</reference>
<reference key="2">
    <citation type="journal article" date="2004" name="Nature">
        <title>Genome sequence of the Brown Norway rat yields insights into mammalian evolution.</title>
        <authorList>
            <person name="Gibbs R.A."/>
            <person name="Weinstock G.M."/>
            <person name="Metzker M.L."/>
            <person name="Muzny D.M."/>
            <person name="Sodergren E.J."/>
            <person name="Scherer S."/>
            <person name="Scott G."/>
            <person name="Steffen D."/>
            <person name="Worley K.C."/>
            <person name="Burch P.E."/>
            <person name="Okwuonu G."/>
            <person name="Hines S."/>
            <person name="Lewis L."/>
            <person name="Deramo C."/>
            <person name="Delgado O."/>
            <person name="Dugan-Rocha S."/>
            <person name="Miner G."/>
            <person name="Morgan M."/>
            <person name="Hawes A."/>
            <person name="Gill R."/>
            <person name="Holt R.A."/>
            <person name="Adams M.D."/>
            <person name="Amanatides P.G."/>
            <person name="Baden-Tillson H."/>
            <person name="Barnstead M."/>
            <person name="Chin S."/>
            <person name="Evans C.A."/>
            <person name="Ferriera S."/>
            <person name="Fosler C."/>
            <person name="Glodek A."/>
            <person name="Gu Z."/>
            <person name="Jennings D."/>
            <person name="Kraft C.L."/>
            <person name="Nguyen T."/>
            <person name="Pfannkoch C.M."/>
            <person name="Sitter C."/>
            <person name="Sutton G.G."/>
            <person name="Venter J.C."/>
            <person name="Woodage T."/>
            <person name="Smith D."/>
            <person name="Lee H.-M."/>
            <person name="Gustafson E."/>
            <person name="Cahill P."/>
            <person name="Kana A."/>
            <person name="Doucette-Stamm L."/>
            <person name="Weinstock K."/>
            <person name="Fechtel K."/>
            <person name="Weiss R.B."/>
            <person name="Dunn D.M."/>
            <person name="Green E.D."/>
            <person name="Blakesley R.W."/>
            <person name="Bouffard G.G."/>
            <person name="De Jong P.J."/>
            <person name="Osoegawa K."/>
            <person name="Zhu B."/>
            <person name="Marra M."/>
            <person name="Schein J."/>
            <person name="Bosdet I."/>
            <person name="Fjell C."/>
            <person name="Jones S."/>
            <person name="Krzywinski M."/>
            <person name="Mathewson C."/>
            <person name="Siddiqui A."/>
            <person name="Wye N."/>
            <person name="McPherson J."/>
            <person name="Zhao S."/>
            <person name="Fraser C.M."/>
            <person name="Shetty J."/>
            <person name="Shatsman S."/>
            <person name="Geer K."/>
            <person name="Chen Y."/>
            <person name="Abramzon S."/>
            <person name="Nierman W.C."/>
            <person name="Havlak P.H."/>
            <person name="Chen R."/>
            <person name="Durbin K.J."/>
            <person name="Egan A."/>
            <person name="Ren Y."/>
            <person name="Song X.-Z."/>
            <person name="Li B."/>
            <person name="Liu Y."/>
            <person name="Qin X."/>
            <person name="Cawley S."/>
            <person name="Cooney A.J."/>
            <person name="D'Souza L.M."/>
            <person name="Martin K."/>
            <person name="Wu J.Q."/>
            <person name="Gonzalez-Garay M.L."/>
            <person name="Jackson A.R."/>
            <person name="Kalafus K.J."/>
            <person name="McLeod M.P."/>
            <person name="Milosavljevic A."/>
            <person name="Virk D."/>
            <person name="Volkov A."/>
            <person name="Wheeler D.A."/>
            <person name="Zhang Z."/>
            <person name="Bailey J.A."/>
            <person name="Eichler E.E."/>
            <person name="Tuzun E."/>
            <person name="Birney E."/>
            <person name="Mongin E."/>
            <person name="Ureta-Vidal A."/>
            <person name="Woodwark C."/>
            <person name="Zdobnov E."/>
            <person name="Bork P."/>
            <person name="Suyama M."/>
            <person name="Torrents D."/>
            <person name="Alexandersson M."/>
            <person name="Trask B.J."/>
            <person name="Young J.M."/>
            <person name="Huang H."/>
            <person name="Wang H."/>
            <person name="Xing H."/>
            <person name="Daniels S."/>
            <person name="Gietzen D."/>
            <person name="Schmidt J."/>
            <person name="Stevens K."/>
            <person name="Vitt U."/>
            <person name="Wingrove J."/>
            <person name="Camara F."/>
            <person name="Mar Alba M."/>
            <person name="Abril J.F."/>
            <person name="Guigo R."/>
            <person name="Smit A."/>
            <person name="Dubchak I."/>
            <person name="Rubin E.M."/>
            <person name="Couronne O."/>
            <person name="Poliakov A."/>
            <person name="Huebner N."/>
            <person name="Ganten D."/>
            <person name="Goesele C."/>
            <person name="Hummel O."/>
            <person name="Kreitler T."/>
            <person name="Lee Y.-A."/>
            <person name="Monti J."/>
            <person name="Schulz H."/>
            <person name="Zimdahl H."/>
            <person name="Himmelbauer H."/>
            <person name="Lehrach H."/>
            <person name="Jacob H.J."/>
            <person name="Bromberg S."/>
            <person name="Gullings-Handley J."/>
            <person name="Jensen-Seaman M.I."/>
            <person name="Kwitek A.E."/>
            <person name="Lazar J."/>
            <person name="Pasko D."/>
            <person name="Tonellato P.J."/>
            <person name="Twigger S."/>
            <person name="Ponting C.P."/>
            <person name="Duarte J.M."/>
            <person name="Rice S."/>
            <person name="Goodstadt L."/>
            <person name="Beatson S.A."/>
            <person name="Emes R.D."/>
            <person name="Winter E.E."/>
            <person name="Webber C."/>
            <person name="Brandt P."/>
            <person name="Nyakatura G."/>
            <person name="Adetobi M."/>
            <person name="Chiaromonte F."/>
            <person name="Elnitski L."/>
            <person name="Eswara P."/>
            <person name="Hardison R.C."/>
            <person name="Hou M."/>
            <person name="Kolbe D."/>
            <person name="Makova K."/>
            <person name="Miller W."/>
            <person name="Nekrutenko A."/>
            <person name="Riemer C."/>
            <person name="Schwartz S."/>
            <person name="Taylor J."/>
            <person name="Yang S."/>
            <person name="Zhang Y."/>
            <person name="Lindpaintner K."/>
            <person name="Andrews T.D."/>
            <person name="Caccamo M."/>
            <person name="Clamp M."/>
            <person name="Clarke L."/>
            <person name="Curwen V."/>
            <person name="Durbin R.M."/>
            <person name="Eyras E."/>
            <person name="Searle S.M."/>
            <person name="Cooper G.M."/>
            <person name="Batzoglou S."/>
            <person name="Brudno M."/>
            <person name="Sidow A."/>
            <person name="Stone E.A."/>
            <person name="Payseur B.A."/>
            <person name="Bourque G."/>
            <person name="Lopez-Otin C."/>
            <person name="Puente X.S."/>
            <person name="Chakrabarti K."/>
            <person name="Chatterji S."/>
            <person name="Dewey C."/>
            <person name="Pachter L."/>
            <person name="Bray N."/>
            <person name="Yap V.B."/>
            <person name="Caspi A."/>
            <person name="Tesler G."/>
            <person name="Pevzner P.A."/>
            <person name="Haussler D."/>
            <person name="Roskin K.M."/>
            <person name="Baertsch R."/>
            <person name="Clawson H."/>
            <person name="Furey T.S."/>
            <person name="Hinrichs A.S."/>
            <person name="Karolchik D."/>
            <person name="Kent W.J."/>
            <person name="Rosenbloom K.R."/>
            <person name="Trumbower H."/>
            <person name="Weirauch M."/>
            <person name="Cooper D.N."/>
            <person name="Stenson P.D."/>
            <person name="Ma B."/>
            <person name="Brent M."/>
            <person name="Arumugam M."/>
            <person name="Shteynberg D."/>
            <person name="Copley R.R."/>
            <person name="Taylor M.S."/>
            <person name="Riethman H."/>
            <person name="Mudunuri U."/>
            <person name="Peterson J."/>
            <person name="Guyer M."/>
            <person name="Felsenfeld A."/>
            <person name="Old S."/>
            <person name="Mockrin S."/>
            <person name="Collins F.S."/>
        </authorList>
    </citation>
    <scope>NUCLEOTIDE SEQUENCE [LARGE SCALE GENOMIC DNA]</scope>
    <source>
        <strain>Brown Norway</strain>
    </source>
</reference>
<reference key="3">
    <citation type="journal article" date="2013" name="Cell. Mol. Life Sci.">
        <title>Structure and evolution of vertebrate aldehyde oxidases: from gene duplication to gene suppression.</title>
        <authorList>
            <person name="Kurosaki M."/>
            <person name="Bolis M."/>
            <person name="Fratelli M."/>
            <person name="Barzago M.M."/>
            <person name="Pattini L."/>
            <person name="Perretta G."/>
            <person name="Terao M."/>
            <person name="Garattini E."/>
        </authorList>
    </citation>
    <scope>IDENTIFICATION OF PARALOGS</scope>
</reference>
<evidence type="ECO:0000250" key="1">
    <source>
        <dbReference type="UniProtKB" id="O54754"/>
    </source>
</evidence>
<evidence type="ECO:0000250" key="2">
    <source>
        <dbReference type="UniProtKB" id="Q06278"/>
    </source>
</evidence>
<evidence type="ECO:0000250" key="3">
    <source>
        <dbReference type="UniProtKB" id="Q5SGK3"/>
    </source>
</evidence>
<evidence type="ECO:0000255" key="4">
    <source>
        <dbReference type="PROSITE-ProRule" id="PRU00465"/>
    </source>
</evidence>
<evidence type="ECO:0000255" key="5">
    <source>
        <dbReference type="PROSITE-ProRule" id="PRU00718"/>
    </source>
</evidence>
<evidence type="ECO:0000305" key="6"/>
<evidence type="ECO:0000305" key="7">
    <source>
    </source>
</evidence>
<dbReference type="EC" id="1.2.3.1"/>
<dbReference type="EC" id="1.17.3.-"/>
<dbReference type="EMBL" id="AY665588">
    <property type="protein sequence ID" value="AAV68255.1"/>
    <property type="molecule type" value="mRNA"/>
</dbReference>
<dbReference type="EMBL" id="AABR06060563">
    <property type="status" value="NOT_ANNOTATED_CDS"/>
    <property type="molecule type" value="Genomic_DNA"/>
</dbReference>
<dbReference type="EMBL" id="AABR06060564">
    <property type="status" value="NOT_ANNOTATED_CDS"/>
    <property type="molecule type" value="Genomic_DNA"/>
</dbReference>
<dbReference type="EMBL" id="AABR06060565">
    <property type="status" value="NOT_ANNOTATED_CDS"/>
    <property type="molecule type" value="Genomic_DNA"/>
</dbReference>
<dbReference type="EMBL" id="AABR06060566">
    <property type="status" value="NOT_ANNOTATED_CDS"/>
    <property type="molecule type" value="Genomic_DNA"/>
</dbReference>
<dbReference type="RefSeq" id="NP_001008522.1">
    <property type="nucleotide sequence ID" value="NM_001008522.1"/>
</dbReference>
<dbReference type="SMR" id="Q5QE78"/>
<dbReference type="FunCoup" id="Q5QE78">
    <property type="interactions" value="109"/>
</dbReference>
<dbReference type="STRING" id="10116.ENSRNOP00000047535"/>
<dbReference type="GlyGen" id="Q5QE78">
    <property type="glycosylation" value="1 site"/>
</dbReference>
<dbReference type="iPTMnet" id="Q5QE78"/>
<dbReference type="PhosphoSitePlus" id="Q5QE78"/>
<dbReference type="PaxDb" id="10116-ENSRNOP00000047535"/>
<dbReference type="GeneID" id="316421"/>
<dbReference type="KEGG" id="rno:316421"/>
<dbReference type="UCSC" id="RGD:1359668">
    <property type="organism name" value="rat"/>
</dbReference>
<dbReference type="AGR" id="RGD:1359668"/>
<dbReference type="CTD" id="213043"/>
<dbReference type="RGD" id="1359668">
    <property type="gene designation" value="Aox2"/>
</dbReference>
<dbReference type="eggNOG" id="KOG0430">
    <property type="taxonomic scope" value="Eukaryota"/>
</dbReference>
<dbReference type="InParanoid" id="Q5QE78"/>
<dbReference type="OrthoDB" id="8300278at2759"/>
<dbReference type="PhylomeDB" id="Q5QE78"/>
<dbReference type="BRENDA" id="1.2.3.1">
    <property type="organism ID" value="5301"/>
</dbReference>
<dbReference type="PRO" id="PR:Q5QE78"/>
<dbReference type="Proteomes" id="UP000002494">
    <property type="component" value="Unplaced"/>
</dbReference>
<dbReference type="GO" id="GO:0005829">
    <property type="term" value="C:cytosol"/>
    <property type="evidence" value="ECO:0000250"/>
    <property type="project" value="UniProtKB"/>
</dbReference>
<dbReference type="GO" id="GO:0051537">
    <property type="term" value="F:2 iron, 2 sulfur cluster binding"/>
    <property type="evidence" value="ECO:0000250"/>
    <property type="project" value="UniProtKB"/>
</dbReference>
<dbReference type="GO" id="GO:0004031">
    <property type="term" value="F:aldehyde oxidase activity"/>
    <property type="evidence" value="ECO:0000250"/>
    <property type="project" value="UniProtKB"/>
</dbReference>
<dbReference type="GO" id="GO:0071949">
    <property type="term" value="F:FAD binding"/>
    <property type="evidence" value="ECO:0007669"/>
    <property type="project" value="InterPro"/>
</dbReference>
<dbReference type="GO" id="GO:0050660">
    <property type="term" value="F:flavin adenine dinucleotide binding"/>
    <property type="evidence" value="ECO:0000250"/>
    <property type="project" value="UniProtKB"/>
</dbReference>
<dbReference type="GO" id="GO:0005506">
    <property type="term" value="F:iron ion binding"/>
    <property type="evidence" value="ECO:0000250"/>
    <property type="project" value="UniProtKB"/>
</dbReference>
<dbReference type="GO" id="GO:0043546">
    <property type="term" value="F:molybdopterin cofactor binding"/>
    <property type="evidence" value="ECO:0000250"/>
    <property type="project" value="UniProtKB"/>
</dbReference>
<dbReference type="GO" id="GO:0051287">
    <property type="term" value="F:NAD binding"/>
    <property type="evidence" value="ECO:0007669"/>
    <property type="project" value="InterPro"/>
</dbReference>
<dbReference type="GO" id="GO:0042803">
    <property type="term" value="F:protein homodimerization activity"/>
    <property type="evidence" value="ECO:0000250"/>
    <property type="project" value="UniProtKB"/>
</dbReference>
<dbReference type="GO" id="GO:0006805">
    <property type="term" value="P:xenobiotic metabolic process"/>
    <property type="evidence" value="ECO:0000250"/>
    <property type="project" value="UniProtKB"/>
</dbReference>
<dbReference type="CDD" id="cd00207">
    <property type="entry name" value="fer2"/>
    <property type="match status" value="1"/>
</dbReference>
<dbReference type="FunFam" id="1.10.150.120:FF:000001">
    <property type="entry name" value="Aldehyde oxidase 1"/>
    <property type="match status" value="1"/>
</dbReference>
<dbReference type="FunFam" id="3.10.20.30:FF:000015">
    <property type="entry name" value="Aldehyde oxidase 1"/>
    <property type="match status" value="1"/>
</dbReference>
<dbReference type="FunFam" id="3.30.365.10:FF:000003">
    <property type="entry name" value="Aldehyde oxidase 1"/>
    <property type="match status" value="1"/>
</dbReference>
<dbReference type="FunFam" id="3.90.1170.50:FF:000001">
    <property type="entry name" value="Aldehyde oxidase 1"/>
    <property type="match status" value="1"/>
</dbReference>
<dbReference type="FunFam" id="3.30.365.10:FF:000025">
    <property type="entry name" value="Aldehyde oxidase 4"/>
    <property type="match status" value="1"/>
</dbReference>
<dbReference type="FunFam" id="3.30.365.10:FF:000001">
    <property type="entry name" value="Xanthine dehydrogenase oxidase"/>
    <property type="match status" value="1"/>
</dbReference>
<dbReference type="FunFam" id="3.30.365.10:FF:000004">
    <property type="entry name" value="Xanthine dehydrogenase oxidase"/>
    <property type="match status" value="1"/>
</dbReference>
<dbReference type="FunFam" id="3.30.390.50:FF:000001">
    <property type="entry name" value="Xanthine dehydrogenase oxidase"/>
    <property type="match status" value="1"/>
</dbReference>
<dbReference type="FunFam" id="3.30.43.10:FF:000001">
    <property type="entry name" value="Xanthine dehydrogenase/oxidase"/>
    <property type="match status" value="1"/>
</dbReference>
<dbReference type="FunFam" id="3.30.465.10:FF:000004">
    <property type="entry name" value="Xanthine dehydrogenase/oxidase"/>
    <property type="match status" value="1"/>
</dbReference>
<dbReference type="Gene3D" id="3.10.20.30">
    <property type="match status" value="1"/>
</dbReference>
<dbReference type="Gene3D" id="3.30.465.10">
    <property type="match status" value="1"/>
</dbReference>
<dbReference type="Gene3D" id="1.10.150.120">
    <property type="entry name" value="[2Fe-2S]-binding domain"/>
    <property type="match status" value="1"/>
</dbReference>
<dbReference type="Gene3D" id="3.90.1170.50">
    <property type="entry name" value="Aldehyde oxidase/xanthine dehydrogenase, a/b hammerhead"/>
    <property type="match status" value="1"/>
</dbReference>
<dbReference type="Gene3D" id="3.30.365.10">
    <property type="entry name" value="Aldehyde oxidase/xanthine dehydrogenase, molybdopterin binding domain"/>
    <property type="match status" value="4"/>
</dbReference>
<dbReference type="Gene3D" id="3.30.390.50">
    <property type="entry name" value="CO dehydrogenase flavoprotein, C-terminal domain"/>
    <property type="match status" value="1"/>
</dbReference>
<dbReference type="Gene3D" id="3.30.43.10">
    <property type="entry name" value="Uridine Diphospho-n-acetylenolpyruvylglucosamine Reductase, domain 2"/>
    <property type="match status" value="1"/>
</dbReference>
<dbReference type="InterPro" id="IPR002888">
    <property type="entry name" value="2Fe-2S-bd"/>
</dbReference>
<dbReference type="InterPro" id="IPR036884">
    <property type="entry name" value="2Fe-2S-bd_dom_sf"/>
</dbReference>
<dbReference type="InterPro" id="IPR036010">
    <property type="entry name" value="2Fe-2S_ferredoxin-like_sf"/>
</dbReference>
<dbReference type="InterPro" id="IPR001041">
    <property type="entry name" value="2Fe-2S_ferredoxin-type"/>
</dbReference>
<dbReference type="InterPro" id="IPR006058">
    <property type="entry name" value="2Fe2S_fd_BS"/>
</dbReference>
<dbReference type="InterPro" id="IPR000674">
    <property type="entry name" value="Ald_Oxase/Xan_DH_a/b"/>
</dbReference>
<dbReference type="InterPro" id="IPR036856">
    <property type="entry name" value="Ald_Oxase/Xan_DH_a/b_sf"/>
</dbReference>
<dbReference type="InterPro" id="IPR016208">
    <property type="entry name" value="Ald_Oxase/xanthine_DH-like"/>
</dbReference>
<dbReference type="InterPro" id="IPR014313">
    <property type="entry name" value="Aldehyde_oxidase"/>
</dbReference>
<dbReference type="InterPro" id="IPR008274">
    <property type="entry name" value="AldOxase/xan_DH_MoCoBD1"/>
</dbReference>
<dbReference type="InterPro" id="IPR046867">
    <property type="entry name" value="AldOxase/xan_DH_MoCoBD2"/>
</dbReference>
<dbReference type="InterPro" id="IPR037165">
    <property type="entry name" value="AldOxase/xan_DH_Mopterin-bd_sf"/>
</dbReference>
<dbReference type="InterPro" id="IPR012675">
    <property type="entry name" value="Beta-grasp_dom_sf"/>
</dbReference>
<dbReference type="InterPro" id="IPR005107">
    <property type="entry name" value="CO_DH_flav_C"/>
</dbReference>
<dbReference type="InterPro" id="IPR036683">
    <property type="entry name" value="CO_DH_flav_C_dom_sf"/>
</dbReference>
<dbReference type="InterPro" id="IPR016166">
    <property type="entry name" value="FAD-bd_PCMH"/>
</dbReference>
<dbReference type="InterPro" id="IPR036318">
    <property type="entry name" value="FAD-bd_PCMH-like_sf"/>
</dbReference>
<dbReference type="InterPro" id="IPR016167">
    <property type="entry name" value="FAD-bd_PCMH_sub1"/>
</dbReference>
<dbReference type="InterPro" id="IPR016169">
    <property type="entry name" value="FAD-bd_PCMH_sub2"/>
</dbReference>
<dbReference type="InterPro" id="IPR002346">
    <property type="entry name" value="Mopterin_DH_FAD-bd"/>
</dbReference>
<dbReference type="NCBIfam" id="TIGR02969">
    <property type="entry name" value="mam_aldehyde_ox"/>
    <property type="match status" value="1"/>
</dbReference>
<dbReference type="PANTHER" id="PTHR45444">
    <property type="entry name" value="XANTHINE DEHYDROGENASE"/>
    <property type="match status" value="1"/>
</dbReference>
<dbReference type="PANTHER" id="PTHR45444:SF3">
    <property type="entry name" value="XANTHINE DEHYDROGENASE"/>
    <property type="match status" value="1"/>
</dbReference>
<dbReference type="Pfam" id="PF01315">
    <property type="entry name" value="Ald_Xan_dh_C"/>
    <property type="match status" value="1"/>
</dbReference>
<dbReference type="Pfam" id="PF03450">
    <property type="entry name" value="CO_deh_flav_C"/>
    <property type="match status" value="1"/>
</dbReference>
<dbReference type="Pfam" id="PF00941">
    <property type="entry name" value="FAD_binding_5"/>
    <property type="match status" value="1"/>
</dbReference>
<dbReference type="Pfam" id="PF00111">
    <property type="entry name" value="Fer2"/>
    <property type="match status" value="1"/>
</dbReference>
<dbReference type="Pfam" id="PF01799">
    <property type="entry name" value="Fer2_2"/>
    <property type="match status" value="1"/>
</dbReference>
<dbReference type="Pfam" id="PF02738">
    <property type="entry name" value="MoCoBD_1"/>
    <property type="match status" value="1"/>
</dbReference>
<dbReference type="Pfam" id="PF20256">
    <property type="entry name" value="MoCoBD_2"/>
    <property type="match status" value="1"/>
</dbReference>
<dbReference type="PIRSF" id="PIRSF000127">
    <property type="entry name" value="Xanthine_DH"/>
    <property type="match status" value="1"/>
</dbReference>
<dbReference type="SMART" id="SM01008">
    <property type="entry name" value="Ald_Xan_dh_C"/>
    <property type="match status" value="1"/>
</dbReference>
<dbReference type="SMART" id="SM01092">
    <property type="entry name" value="CO_deh_flav_C"/>
    <property type="match status" value="1"/>
</dbReference>
<dbReference type="SUPFAM" id="SSF54292">
    <property type="entry name" value="2Fe-2S ferredoxin-like"/>
    <property type="match status" value="1"/>
</dbReference>
<dbReference type="SUPFAM" id="SSF55447">
    <property type="entry name" value="CO dehydrogenase flavoprotein C-terminal domain-like"/>
    <property type="match status" value="1"/>
</dbReference>
<dbReference type="SUPFAM" id="SSF47741">
    <property type="entry name" value="CO dehydrogenase ISP C-domain like"/>
    <property type="match status" value="1"/>
</dbReference>
<dbReference type="SUPFAM" id="SSF54665">
    <property type="entry name" value="CO dehydrogenase molybdoprotein N-domain-like"/>
    <property type="match status" value="1"/>
</dbReference>
<dbReference type="SUPFAM" id="SSF56176">
    <property type="entry name" value="FAD-binding/transporter-associated domain-like"/>
    <property type="match status" value="1"/>
</dbReference>
<dbReference type="SUPFAM" id="SSF56003">
    <property type="entry name" value="Molybdenum cofactor-binding domain"/>
    <property type="match status" value="1"/>
</dbReference>
<dbReference type="PROSITE" id="PS00197">
    <property type="entry name" value="2FE2S_FER_1"/>
    <property type="match status" value="1"/>
</dbReference>
<dbReference type="PROSITE" id="PS51085">
    <property type="entry name" value="2FE2S_FER_2"/>
    <property type="match status" value="1"/>
</dbReference>
<dbReference type="PROSITE" id="PS51387">
    <property type="entry name" value="FAD_PCMH"/>
    <property type="match status" value="1"/>
</dbReference>
<organism>
    <name type="scientific">Rattus norvegicus</name>
    <name type="common">Rat</name>
    <dbReference type="NCBI Taxonomy" id="10116"/>
    <lineage>
        <taxon>Eukaryota</taxon>
        <taxon>Metazoa</taxon>
        <taxon>Chordata</taxon>
        <taxon>Craniata</taxon>
        <taxon>Vertebrata</taxon>
        <taxon>Euteleostomi</taxon>
        <taxon>Mammalia</taxon>
        <taxon>Eutheria</taxon>
        <taxon>Euarchontoglires</taxon>
        <taxon>Glires</taxon>
        <taxon>Rodentia</taxon>
        <taxon>Myomorpha</taxon>
        <taxon>Muroidea</taxon>
        <taxon>Muridae</taxon>
        <taxon>Murinae</taxon>
        <taxon>Rattus</taxon>
    </lineage>
</organism>
<keyword id="KW-0001">2Fe-2S</keyword>
<keyword id="KW-0963">Cytoplasm</keyword>
<keyword id="KW-0274">FAD</keyword>
<keyword id="KW-0285">Flavoprotein</keyword>
<keyword id="KW-0408">Iron</keyword>
<keyword id="KW-0411">Iron-sulfur</keyword>
<keyword id="KW-0479">Metal-binding</keyword>
<keyword id="KW-0500">Molybdenum</keyword>
<keyword id="KW-0560">Oxidoreductase</keyword>
<keyword id="KW-1185">Reference proteome</keyword>
<feature type="chain" id="PRO_0000425246" description="Aldehyde oxidase 2">
    <location>
        <begin position="1"/>
        <end position="1345"/>
    </location>
</feature>
<feature type="domain" description="2Fe-2S ferredoxin-type" evidence="4">
    <location>
        <begin position="9"/>
        <end position="96"/>
    </location>
</feature>
<feature type="domain" description="FAD-binding PCMH-type" evidence="5">
    <location>
        <begin position="238"/>
        <end position="423"/>
    </location>
</feature>
<feature type="active site" description="Proton acceptor; for azaheterocycle hydroxylase activity" evidence="1">
    <location>
        <position position="1276"/>
    </location>
</feature>
<feature type="binding site" evidence="2">
    <location>
        <position position="48"/>
    </location>
    <ligand>
        <name>[2Fe-2S] cluster</name>
        <dbReference type="ChEBI" id="CHEBI:190135"/>
        <label>1</label>
    </ligand>
</feature>
<feature type="binding site" evidence="2">
    <location>
        <position position="53"/>
    </location>
    <ligand>
        <name>[2Fe-2S] cluster</name>
        <dbReference type="ChEBI" id="CHEBI:190135"/>
        <label>1</label>
    </ligand>
</feature>
<feature type="binding site" evidence="2">
    <location>
        <position position="56"/>
    </location>
    <ligand>
        <name>[2Fe-2S] cluster</name>
        <dbReference type="ChEBI" id="CHEBI:190135"/>
        <label>1</label>
    </ligand>
</feature>
<feature type="binding site" evidence="2">
    <location>
        <position position="78"/>
    </location>
    <ligand>
        <name>[2Fe-2S] cluster</name>
        <dbReference type="ChEBI" id="CHEBI:190135"/>
        <label>1</label>
    </ligand>
</feature>
<feature type="binding site" evidence="2">
    <location>
        <position position="117"/>
    </location>
    <ligand>
        <name>Mo-molybdopterin</name>
        <dbReference type="ChEBI" id="CHEBI:71302"/>
    </ligand>
</feature>
<feature type="binding site" evidence="2">
    <location>
        <position position="118"/>
    </location>
    <ligand>
        <name>[2Fe-2S] cluster</name>
        <dbReference type="ChEBI" id="CHEBI:190135"/>
        <label>2</label>
    </ligand>
</feature>
<feature type="binding site" evidence="2">
    <location>
        <position position="121"/>
    </location>
    <ligand>
        <name>[2Fe-2S] cluster</name>
        <dbReference type="ChEBI" id="CHEBI:190135"/>
        <label>2</label>
    </ligand>
</feature>
<feature type="binding site" evidence="2">
    <location>
        <position position="153"/>
    </location>
    <ligand>
        <name>[2Fe-2S] cluster</name>
        <dbReference type="ChEBI" id="CHEBI:190135"/>
        <label>2</label>
    </ligand>
</feature>
<feature type="binding site" evidence="2">
    <location>
        <position position="155"/>
    </location>
    <ligand>
        <name>[2Fe-2S] cluster</name>
        <dbReference type="ChEBI" id="CHEBI:190135"/>
        <label>2</label>
    </ligand>
</feature>
<feature type="binding site" evidence="2">
    <location>
        <position position="155"/>
    </location>
    <ligand>
        <name>Mo-molybdopterin</name>
        <dbReference type="ChEBI" id="CHEBI:71302"/>
    </ligand>
</feature>
<feature type="binding site" evidence="2">
    <location>
        <begin position="266"/>
        <end position="273"/>
    </location>
    <ligand>
        <name>FAD</name>
        <dbReference type="ChEBI" id="CHEBI:57692"/>
    </ligand>
</feature>
<feature type="binding site" evidence="2">
    <location>
        <position position="347"/>
    </location>
    <ligand>
        <name>FAD</name>
        <dbReference type="ChEBI" id="CHEBI:57692"/>
    </ligand>
</feature>
<feature type="binding site" evidence="2">
    <location>
        <position position="356"/>
    </location>
    <ligand>
        <name>FAD</name>
        <dbReference type="ChEBI" id="CHEBI:57692"/>
    </ligand>
</feature>
<feature type="binding site" evidence="2">
    <location>
        <position position="360"/>
    </location>
    <ligand>
        <name>FAD</name>
        <dbReference type="ChEBI" id="CHEBI:57692"/>
    </ligand>
</feature>
<feature type="binding site" evidence="2">
    <location>
        <position position="369"/>
    </location>
    <ligand>
        <name>FAD</name>
        <dbReference type="ChEBI" id="CHEBI:57692"/>
    </ligand>
</feature>
<feature type="binding site" evidence="2">
    <location>
        <position position="413"/>
    </location>
    <ligand>
        <name>FAD</name>
        <dbReference type="ChEBI" id="CHEBI:57692"/>
    </ligand>
</feature>
<feature type="binding site" evidence="2">
    <location>
        <begin position="812"/>
        <end position="813"/>
    </location>
    <ligand>
        <name>Mo-molybdopterin</name>
        <dbReference type="ChEBI" id="CHEBI:71302"/>
    </ligand>
</feature>
<feature type="binding site" evidence="2">
    <location>
        <begin position="1094"/>
        <end position="1097"/>
    </location>
    <ligand>
        <name>Mo-molybdopterin</name>
        <dbReference type="ChEBI" id="CHEBI:71302"/>
    </ligand>
</feature>
<feature type="binding site" evidence="2">
    <location>
        <position position="1209"/>
    </location>
    <ligand>
        <name>Mo-molybdopterin</name>
        <dbReference type="ChEBI" id="CHEBI:71302"/>
    </ligand>
</feature>
<feature type="binding site" evidence="2">
    <location>
        <position position="1274"/>
    </location>
    <ligand>
        <name>Mo-molybdopterin</name>
        <dbReference type="ChEBI" id="CHEBI:71302"/>
    </ligand>
</feature>
<feature type="sequence conflict" description="In Ref. 2; AABR06060563/AABR06060564/AABR06060565/AABR06060566." evidence="6" ref="2">
    <original>T</original>
    <variation>TK</variation>
    <location>
        <position position="70"/>
    </location>
</feature>
<feature type="sequence conflict" description="In Ref. 2; AABR06060563/AABR06060564/AABR06060565/AABR06060566." evidence="6" ref="2">
    <original>SLGGHVISRHYYSDLNPILSVGNATLNLLSE</original>
    <variation>VVSGHIVVSHHCQPLKACLSLSCIEMAFPST</variation>
    <location>
        <begin position="356"/>
        <end position="386"/>
    </location>
</feature>
<feature type="sequence conflict" description="In Ref. 2; AABR06060563/AABR06060564/AABR06060565/AABR06060566." evidence="6" ref="2">
    <original>N</original>
    <variation>F</variation>
    <location>
        <position position="1148"/>
    </location>
</feature>
<feature type="sequence conflict" description="In Ref. 2; AABR06060563/AABR06060564/AABR06060565/AABR06060566." evidence="6" ref="2">
    <original>DV</original>
    <variation>EL</variation>
    <location>
        <begin position="1225"/>
        <end position="1226"/>
    </location>
</feature>
<proteinExistence type="evidence at transcript level"/>
<sequence>MPCPSQSSDELEFFVNGKKVTEKNVDPEVTLLAFLRKNLRLTGTKYACGTGSCGACTVMVSQHDPVCKKTRHFSVMACLVPLCSLHGAAVTTVEGVGSIKTRLHPVQERLAKSHGTQCGFCSPGMVMSMYALLRNHPQPSEEQLLEALGGNLCRCTGYRPILESGRTFCMESDGCLQKGTGQCCLDQKEGDSSGSKSDICTELFVKDEFQPLDPTQELIFPPELLRMAENPEKQTLTFYGERITWIAPGTLQELLVLKAKYPEAPLISGNTALGPAMKSQGHFYPVLLSPARIPDLRMVTKTSGGLTIGACCSLAQVKDVLAESISELPEEKTQTYRALLKHLRSLAGQQIRNMASLGGHVISRHYYSDLNPILSVGNATLNLLSEEGLRQIPLNGHFLAGLANEDLKPEEILGSVYIPHSQKREFVSAFRQAQCHQNALPDVNAGMRVLFKEGTDIIEELSIAYGGVGPTTVSAHRSCQQLLGRRWNALLLDEACRLLLDEVSLPGSAVGGKVEFRRTLIVSFFFKFYLEVLQELKADKRLLPESTDSQRYPEIADGSRSSLGDFQVTLPQGVQTYQRVNSHQPLQDPVGRPIMHLSGLKHATGEAVFCDDIPRVDKELFMALVTSTRAHARIISIDSSEVLDLPGVVDVITAEDIPGNNGEEDDKLLAVDKVLCVGQVVCAVVAETDVQAKRATKKIKITYEDLKPVLFTIEDAIQHNSFLCPEKKLEQGNMEEAFENVDQIVEGKVHVGGQEHFYMETQRVLVIPKTEDKELDMYVSTQDPAHVQKTVSSALNIPLSRITCHVKRVGGGFGGKVGRPAVFGAIAAVGAVKTGRPIRLVLDREDDMLITGGRHPLFAKYKVGFMNSGRIKALDIECYINGGCTLDDSELVTEFLVLKLENAYKIRNLRLRGRACMTNLPSNTAFRGFGFPQGALVTESCITAVAAKCGLPPEKIREKNMYKTVDKTIYKQAFNPEPLIRCWNECLDKSSFAIRRTRVDEFNKKSYWRKRGIAVVPMKFSVGFAATSYHQAAALVHIYTDGSVLVAHGGNELGQGIHTKMLQVASRELKIPMSYLHTSETCTAAVPNTIATAASVGADVNGRAVQNACQILLKRLEPVIKKNPEGTWRDWIEAAFEQRISLSATGYNRGYKAFMDWEKGEGDPFPYYVYGAACSEVEIDCLTGAHKKMRTDIVMDACCSLNPAIDVGQIEGAFIQGMGLYTTEDVHYSPEGVLYSRSPDKYKIPTVTDVPEQFNVSLLPSSQTPLTIYSSKGLGESGMFLGSSVFFAIADAVAAARRQRDIAEDFTVKSPATPERVRMACADRFTDMIPRDDPKTFKPWSIPIA</sequence>
<name>AOXB_RAT</name>
<accession>Q5QE78</accession>
<accession>D4A6S5</accession>
<gene>
    <name type="primary">Aox2</name>
    <name type="synonym">Aoh3</name>
    <name type="synonym">Aox3l1</name>
</gene>
<protein>
    <recommendedName>
        <fullName>Aldehyde oxidase 2</fullName>
        <ecNumber>1.2.3.1</ecNumber>
    </recommendedName>
    <alternativeName>
        <fullName>Aldehyde oxidase homolog 3</fullName>
    </alternativeName>
    <alternativeName>
        <fullName>Azaheterocycle hydroxylase 2</fullName>
        <ecNumber>1.17.3.-</ecNumber>
    </alternativeName>
</protein>